<accession>Q32PI5</accession>
<dbReference type="EMBL" id="BC108103">
    <property type="protein sequence ID" value="AAI08104.1"/>
    <property type="molecule type" value="mRNA"/>
</dbReference>
<dbReference type="RefSeq" id="NP_001032554.1">
    <property type="nucleotide sequence ID" value="NM_001037477.1"/>
</dbReference>
<dbReference type="SMR" id="Q32PI5"/>
<dbReference type="FunCoup" id="Q32PI5">
    <property type="interactions" value="2669"/>
</dbReference>
<dbReference type="STRING" id="9913.ENSBTAP00000026449"/>
<dbReference type="PaxDb" id="9913-ENSBTAP00000026449"/>
<dbReference type="PeptideAtlas" id="Q32PI5"/>
<dbReference type="GeneID" id="535321"/>
<dbReference type="KEGG" id="bta:535321"/>
<dbReference type="CTD" id="5518"/>
<dbReference type="eggNOG" id="KOG0211">
    <property type="taxonomic scope" value="Eukaryota"/>
</dbReference>
<dbReference type="InParanoid" id="Q32PI5"/>
<dbReference type="OrthoDB" id="340346at2759"/>
<dbReference type="Proteomes" id="UP000009136">
    <property type="component" value="Unplaced"/>
</dbReference>
<dbReference type="GO" id="GO:0000785">
    <property type="term" value="C:chromatin"/>
    <property type="evidence" value="ECO:0000250"/>
    <property type="project" value="UniProtKB"/>
</dbReference>
<dbReference type="GO" id="GO:0000775">
    <property type="term" value="C:chromosome, centromeric region"/>
    <property type="evidence" value="ECO:0007669"/>
    <property type="project" value="UniProtKB-SubCell"/>
</dbReference>
<dbReference type="GO" id="GO:0005737">
    <property type="term" value="C:cytoplasm"/>
    <property type="evidence" value="ECO:0000314"/>
    <property type="project" value="UniProtKB"/>
</dbReference>
<dbReference type="GO" id="GO:0005829">
    <property type="term" value="C:cytosol"/>
    <property type="evidence" value="ECO:0000318"/>
    <property type="project" value="GO_Central"/>
</dbReference>
<dbReference type="GO" id="GO:0030425">
    <property type="term" value="C:dendrite"/>
    <property type="evidence" value="ECO:0007669"/>
    <property type="project" value="UniProtKB-SubCell"/>
</dbReference>
<dbReference type="GO" id="GO:0090443">
    <property type="term" value="C:FAR/SIN/STRIPAK complex"/>
    <property type="evidence" value="ECO:0000250"/>
    <property type="project" value="UniProtKB"/>
</dbReference>
<dbReference type="GO" id="GO:0016328">
    <property type="term" value="C:lateral plasma membrane"/>
    <property type="evidence" value="ECO:0007669"/>
    <property type="project" value="UniProtKB-SubCell"/>
</dbReference>
<dbReference type="GO" id="GO:0005634">
    <property type="term" value="C:nucleus"/>
    <property type="evidence" value="ECO:0000250"/>
    <property type="project" value="UniProtKB"/>
</dbReference>
<dbReference type="GO" id="GO:0000159">
    <property type="term" value="C:protein phosphatase type 2A complex"/>
    <property type="evidence" value="ECO:0000318"/>
    <property type="project" value="GO_Central"/>
</dbReference>
<dbReference type="GO" id="GO:0019888">
    <property type="term" value="F:protein phosphatase regulator activity"/>
    <property type="evidence" value="ECO:0000250"/>
    <property type="project" value="UniProtKB"/>
</dbReference>
<dbReference type="GO" id="GO:0051754">
    <property type="term" value="P:meiotic sister chromatid cohesion, centromeric"/>
    <property type="evidence" value="ECO:0000318"/>
    <property type="project" value="GO_Central"/>
</dbReference>
<dbReference type="GO" id="GO:0035331">
    <property type="term" value="P:negative regulation of hippo signaling"/>
    <property type="evidence" value="ECO:0000250"/>
    <property type="project" value="UniProtKB"/>
</dbReference>
<dbReference type="GO" id="GO:0051898">
    <property type="term" value="P:negative regulation of phosphatidylinositol 3-kinase/protein kinase B signal transduction"/>
    <property type="evidence" value="ECO:0000250"/>
    <property type="project" value="UniProtKB"/>
</dbReference>
<dbReference type="GO" id="GO:0051225">
    <property type="term" value="P:spindle assembly"/>
    <property type="evidence" value="ECO:0000318"/>
    <property type="project" value="GO_Central"/>
</dbReference>
<dbReference type="GO" id="GO:0043029">
    <property type="term" value="P:T cell homeostasis"/>
    <property type="evidence" value="ECO:0000250"/>
    <property type="project" value="UniProtKB"/>
</dbReference>
<dbReference type="FunFam" id="1.25.10.10:FF:000011">
    <property type="entry name" value="Serine/threonine-protein phosphatase 2A regulatory subunit A alpha isoform"/>
    <property type="match status" value="1"/>
</dbReference>
<dbReference type="Gene3D" id="1.25.10.10">
    <property type="entry name" value="Leucine-rich Repeat Variant"/>
    <property type="match status" value="1"/>
</dbReference>
<dbReference type="InterPro" id="IPR011989">
    <property type="entry name" value="ARM-like"/>
</dbReference>
<dbReference type="InterPro" id="IPR016024">
    <property type="entry name" value="ARM-type_fold"/>
</dbReference>
<dbReference type="InterPro" id="IPR000357">
    <property type="entry name" value="HEAT"/>
</dbReference>
<dbReference type="InterPro" id="IPR021133">
    <property type="entry name" value="HEAT_type_2"/>
</dbReference>
<dbReference type="InterPro" id="IPR054573">
    <property type="entry name" value="PP2A/SF3B1-like_HEAT"/>
</dbReference>
<dbReference type="InterPro" id="IPR051023">
    <property type="entry name" value="PP2A_Regulatory_Subunit_A"/>
</dbReference>
<dbReference type="PANTHER" id="PTHR10648">
    <property type="entry name" value="SERINE/THREONINE-PROTEIN PHOSPHATASE PP2A 65 KDA REGULATORY SUBUNIT"/>
    <property type="match status" value="1"/>
</dbReference>
<dbReference type="PANTHER" id="PTHR10648:SF2">
    <property type="entry name" value="SERINE_THREONINE-PROTEIN PHOSPHATASE 2A 65 KDA REGULATORY SUBUNIT A ALPHA ISOFORM"/>
    <property type="match status" value="1"/>
</dbReference>
<dbReference type="Pfam" id="PF02985">
    <property type="entry name" value="HEAT"/>
    <property type="match status" value="3"/>
</dbReference>
<dbReference type="Pfam" id="PF13646">
    <property type="entry name" value="HEAT_2"/>
    <property type="match status" value="1"/>
</dbReference>
<dbReference type="Pfam" id="PF22646">
    <property type="entry name" value="PPP2R1A-like_HEAT"/>
    <property type="match status" value="1"/>
</dbReference>
<dbReference type="SUPFAM" id="SSF48371">
    <property type="entry name" value="ARM repeat"/>
    <property type="match status" value="1"/>
</dbReference>
<dbReference type="PROSITE" id="PS50077">
    <property type="entry name" value="HEAT_REPEAT"/>
    <property type="match status" value="11"/>
</dbReference>
<name>2AAA_BOVIN</name>
<reference key="1">
    <citation type="submission" date="2005-10" db="EMBL/GenBank/DDBJ databases">
        <authorList>
            <person name="Moore S."/>
            <person name="Alexander L."/>
            <person name="Brownstein M."/>
            <person name="Guan L."/>
            <person name="Lobo S."/>
            <person name="Meng Y."/>
            <person name="Tanaguchi M."/>
            <person name="Wang Z."/>
            <person name="Yu J."/>
            <person name="Prange C."/>
            <person name="Schreiber K."/>
            <person name="Shenmen C."/>
            <person name="Wagner L."/>
            <person name="Bala M."/>
            <person name="Barbazuk S."/>
            <person name="Barber S."/>
            <person name="Babakaiff R."/>
            <person name="Beland J."/>
            <person name="Chun E."/>
            <person name="Del Rio L."/>
            <person name="Gibson S."/>
            <person name="Hanson R."/>
            <person name="Kirkpatrick R."/>
            <person name="Liu J."/>
            <person name="Matsuo C."/>
            <person name="Mayo M."/>
            <person name="Santos R.R."/>
            <person name="Stott J."/>
            <person name="Tsai M."/>
            <person name="Wong D."/>
            <person name="Siddiqui A."/>
            <person name="Holt R."/>
            <person name="Jones S.J."/>
            <person name="Marra M.A."/>
        </authorList>
    </citation>
    <scope>NUCLEOTIDE SEQUENCE [LARGE SCALE MRNA]</scope>
    <source>
        <strain>Hereford</strain>
        <tissue>Heart ventricle</tissue>
    </source>
</reference>
<reference key="2">
    <citation type="journal article" date="2003" name="J. Biol. Chem.">
        <title>Cytosolic Arl2 is complexed with cofactor D and protein phosphatase 2A.</title>
        <authorList>
            <person name="Shern J.F."/>
            <person name="Sharer J.D."/>
            <person name="Pallas D.C."/>
            <person name="Bartolini F."/>
            <person name="Cowan N.J."/>
            <person name="Reed M.S."/>
            <person name="Pohl J."/>
            <person name="Kahn R.A."/>
        </authorList>
    </citation>
    <scope>IDENTIFICATION IN A COMPLEX WITH ARL2; PPP2CB; PPP2R2A; PPP2R5E AND TBCD</scope>
    <scope>IDENTIFICATION BY MASS SPECTROMETRY</scope>
    <scope>SUBCELLULAR LOCATION</scope>
</reference>
<proteinExistence type="evidence at protein level"/>
<feature type="initiator methionine" description="Removed" evidence="2">
    <location>
        <position position="1"/>
    </location>
</feature>
<feature type="chain" id="PRO_0000405258" description="Serine/threonine-protein phosphatase 2A 65 kDa regulatory subunit A alpha isoform">
    <location>
        <begin position="2"/>
        <end position="589"/>
    </location>
</feature>
<feature type="repeat" description="HEAT 1" evidence="2">
    <location>
        <begin position="8"/>
        <end position="46"/>
    </location>
</feature>
<feature type="repeat" description="HEAT 2" evidence="2">
    <location>
        <begin position="47"/>
        <end position="84"/>
    </location>
</feature>
<feature type="repeat" description="HEAT 3" evidence="2">
    <location>
        <begin position="85"/>
        <end position="123"/>
    </location>
</feature>
<feature type="repeat" description="HEAT 4" evidence="2">
    <location>
        <begin position="124"/>
        <end position="161"/>
    </location>
</feature>
<feature type="repeat" description="HEAT 5" evidence="2">
    <location>
        <begin position="162"/>
        <end position="200"/>
    </location>
</feature>
<feature type="repeat" description="HEAT 6" evidence="2">
    <location>
        <begin position="201"/>
        <end position="239"/>
    </location>
</feature>
<feature type="repeat" description="HEAT 7" evidence="2">
    <location>
        <begin position="240"/>
        <end position="278"/>
    </location>
</feature>
<feature type="repeat" description="HEAT 8" evidence="2">
    <location>
        <begin position="279"/>
        <end position="321"/>
    </location>
</feature>
<feature type="repeat" description="HEAT 9" evidence="2">
    <location>
        <begin position="322"/>
        <end position="360"/>
    </location>
</feature>
<feature type="repeat" description="HEAT 10" evidence="2">
    <location>
        <begin position="361"/>
        <end position="399"/>
    </location>
</feature>
<feature type="repeat" description="HEAT 11" evidence="2">
    <location>
        <begin position="400"/>
        <end position="438"/>
    </location>
</feature>
<feature type="repeat" description="HEAT 12" evidence="2">
    <location>
        <begin position="439"/>
        <end position="477"/>
    </location>
</feature>
<feature type="repeat" description="HEAT 13" evidence="2">
    <location>
        <begin position="478"/>
        <end position="516"/>
    </location>
</feature>
<feature type="repeat" description="HEAT 14" evidence="2">
    <location>
        <begin position="517"/>
        <end position="555"/>
    </location>
</feature>
<feature type="repeat" description="HEAT 15" evidence="2">
    <location>
        <begin position="556"/>
        <end position="589"/>
    </location>
</feature>
<feature type="region of interest" description="PP2A subunit B binding" evidence="1">
    <location>
        <begin position="8"/>
        <end position="399"/>
    </location>
</feature>
<feature type="region of interest" description="Polyoma small and medium T antigens Binding" evidence="1">
    <location>
        <begin position="47"/>
        <end position="321"/>
    </location>
</feature>
<feature type="region of interest" description="SV40 small T antigen binding" evidence="1">
    <location>
        <begin position="85"/>
        <end position="239"/>
    </location>
</feature>
<feature type="region of interest" description="PP2A subunit C binding" evidence="1">
    <location>
        <begin position="400"/>
        <end position="589"/>
    </location>
</feature>
<feature type="modified residue" description="N-acetylalanine" evidence="2">
    <location>
        <position position="2"/>
    </location>
</feature>
<feature type="modified residue" description="N6-acetyllysine" evidence="2">
    <location>
        <position position="280"/>
    </location>
</feature>
<gene>
    <name type="primary">PPP2R1A</name>
</gene>
<evidence type="ECO:0000250" key="1"/>
<evidence type="ECO:0000250" key="2">
    <source>
        <dbReference type="UniProtKB" id="P30153"/>
    </source>
</evidence>
<evidence type="ECO:0000250" key="3">
    <source>
        <dbReference type="UniProtKB" id="Q76MZ3"/>
    </source>
</evidence>
<evidence type="ECO:0000269" key="4">
    <source>
    </source>
</evidence>
<evidence type="ECO:0000305" key="5"/>
<keyword id="KW-0007">Acetylation</keyword>
<keyword id="KW-1003">Cell membrane</keyword>
<keyword id="KW-0966">Cell projection</keyword>
<keyword id="KW-0137">Centromere</keyword>
<keyword id="KW-0158">Chromosome</keyword>
<keyword id="KW-0159">Chromosome partition</keyword>
<keyword id="KW-0963">Cytoplasm</keyword>
<keyword id="KW-0472">Membrane</keyword>
<keyword id="KW-0539">Nucleus</keyword>
<keyword id="KW-1185">Reference proteome</keyword>
<keyword id="KW-0677">Repeat</keyword>
<protein>
    <recommendedName>
        <fullName>Serine/threonine-protein phosphatase 2A 65 kDa regulatory subunit A alpha isoform</fullName>
        <shortName evidence="2">PP2Aa</shortName>
    </recommendedName>
    <alternativeName>
        <fullName>Medium tumor antigen-associated 61 kDa protein</fullName>
    </alternativeName>
    <alternativeName>
        <fullName>PP2A subunit A isoform PR65-alpha</fullName>
    </alternativeName>
    <alternativeName>
        <fullName>PP2A subunit A isoform R1-alpha</fullName>
    </alternativeName>
</protein>
<sequence length="589" mass="65291">MAAADGDDSLYPIAVLIDELRNEDVQLRLNSIKKLSTIALALGVERTRSELLPFLTDTIYDEDEVLLALAEQLGTFTTLVGGPEYVHCLLPPLESLATVEETVVRDKAVESLRAISHEHSPSDLEAHFVPLVKRLAGGDWFTSRTSACGLFSVCYPRVSSAVKAELRQYFRNLCSDDTPMVRRAAASKLGEFAKVLELDNVKSEIIPMFSNLASDEQDSVRLLAVEACVNIAQLLPQEDLEALVMPTLRQAAEDKSWRVRYMVADKFTELHKAVGPEITKTDLVPAFQNLMKDCEAEVRAAASHKVKEFCENLSADCRENVIMTQILPCIKELVSDANQHVKSALASVIMGLSPILGKDSTIEHLLPLFLAQLKDECPEVRLNIISNLDCVNEVIGIRQLSQSLLPAIVELAEDAKWRVRLAIIEYMPLLAGQLGVEFFDEKLNSLCMAWLVDHVYAIREAATSNLKKLVEKFGKEWAHATIIPKVLAMSGDPNYLHRMTTLFCINVLSEVCGQDITTKHMLPTVLRMAGDPVANVRFNVAKSLQKIGPILDNSTLQSEVKPVLEKLTQDQDVDVKYFAQEALTVLSLA</sequence>
<comment type="function">
    <text evidence="2 3">The PR65 subunit of protein phosphatase 2A serves as a scaffolding molecule to coordinate the assembly of the catalytic subunit and a variable regulatory B subunit. Upon interaction with GNA12 promotes dephosphorylation of microtubule associated protein TAU/MAPT. Required for proper chromosome segregation and for centromeric localization of SGO1 in mitosis (By similarity). Together with RACK1 adapter, mediates dephosphorylation of AKT1 at 'Ser-473', preventing AKT1 activation and AKT-mTOR signaling pathway (By similarity). Dephosphorylation of AKT1 is essential for regulatory T-cells (Treg) homeostasis and stability (By similarity). Part of the striatin-interacting phosphatase and kinase (STRIPAK) complexes. STRIPAK complexes have critical roles in protein (de)phosphorylation and are regulators of multiple signaling pathways including Hippo, MAPK, nuclear receptor and cytoskeleton remodeling. Different types of STRIPAK complexes are involved in a variety of biological processes such as cell growth, differentiation, apoptosis, metabolism and immune regulation (By similarity). Key mediator of a quality checkpoint during transcription elongation as part of the Integrator-PP2A (INTAC) complex (By similarity). The INTAC complex drives premature transcription termination of transcripts that are unfavorably configured for transcriptional elongation: within the INTAC complex, acts as a scaffolding subunit for PPP2CA, which catalyzes dephosphorylation of the C-terminal domain (CTD) of Pol II subunit POLR2A/RPB1 and SUPT5H/SPT5, thereby preventing transcriptional elongation (By similarity). Regulates the recruitment of the SKA complex to kinetochores (By similarity).</text>
</comment>
<comment type="subunit">
    <text evidence="2 3 4">PP2A consists of a common heterodimeric core enzyme, composed of PPP2CA a 36 kDa catalytic subunit (subunit C) and PPP2R1A a 65 kDa constant regulatory subunit (PR65 or subunit A), that associates with a variety of regulatory subunits (By similarity). Proteins that associate with the core dimer include three families of regulatory subunits B (the R2/B/PR55/B55, R3/B''/PR72/PR130/PR59 and R5/B'/B56 families), the 48 kDa variable regulatory subunit, viral proteins, and cell signaling molecules (By similarity). Found in a complex with at least ARL2, PPP2CB, PPP2R1A, PPP2R2A, PPP2R5E and TBCD (PubMed:12912990). Interacts with the PP2A C catalytic subunit PPP2CA (By similarity). Interacts with the PP2A B subunit PPP2R2A (By similarity). Interacts with the PP2A B subunit PPP2R5D (By similarity). Interacts with FOXO1; the interaction dephosphorylates FOXO1 on AKT-mediated phosphorylation sites (By similarity). Interacts with IPO9 (By similarity). Interacts with TP53 and SGO1 (By similarity). Interacts with PLA2G16; this interaction might decrease PP2A activity (By similarity). Interacts with CTTNBP2NL (By similarity). Interacts with GNA12; the interaction promotes protein phosphatase 2A activation causing dephosphorylation of MAPT (By similarity). Interacts with CIP2A; this interaction stabilizes CIP2A (By similarity). Interacts with PABIR1/FAM122A (By similarity). Interacts with ADCY8; antagonizes interaction between ADCY8 and calmodulin (By similarity). Interacts with CRTC3 (when phosphorylated at 'Ser-391') (By similarity). Interacts with SPRY2 (By similarity). Part of the core of STRIPAK complexes composed of PP2A catalytic and scaffolding subunits, the striatins (PP2A regulatory subunits), the striatin-associated proteins MOB4, STRIP1 and STRIP2, PDCD10 and members of the STE20 kinases, such as STK24 and STK26 (By similarity). Component of the Integrator-PP2A (INTAC) complex, composed of the Integrator core complex and protein phosphatase 2A subunits PPP2CA and PPP2R1A (By similarity).</text>
</comment>
<comment type="subcellular location">
    <subcellularLocation>
        <location evidence="4">Cytoplasm</location>
    </subcellularLocation>
    <subcellularLocation>
        <location evidence="2">Nucleus</location>
    </subcellularLocation>
    <subcellularLocation>
        <location evidence="2">Chromosome</location>
    </subcellularLocation>
    <subcellularLocation>
        <location evidence="2">Chromosome</location>
        <location evidence="2">Centromere</location>
    </subcellularLocation>
    <subcellularLocation>
        <location evidence="2">Lateral cell membrane</location>
    </subcellularLocation>
    <subcellularLocation>
        <location evidence="2">Cell projection</location>
        <location evidence="2">Dendrite</location>
    </subcellularLocation>
    <text evidence="2">Centromeric localization requires the presence of BUB1. Recruited to chromatin and transcription pause-release checkpoint via its association with the Integrator complex.</text>
</comment>
<comment type="domain">
    <text evidence="1">Each HEAT repeat appears to consist of two alpha helices joined by a hydrophilic region, the intrarepeat loop. The repeat units may be arranged laterally to form a rod-like structure (By similarity).</text>
</comment>
<comment type="similarity">
    <text evidence="5">Belongs to the phosphatase 2A regulatory subunit A family.</text>
</comment>
<organism>
    <name type="scientific">Bos taurus</name>
    <name type="common">Bovine</name>
    <dbReference type="NCBI Taxonomy" id="9913"/>
    <lineage>
        <taxon>Eukaryota</taxon>
        <taxon>Metazoa</taxon>
        <taxon>Chordata</taxon>
        <taxon>Craniata</taxon>
        <taxon>Vertebrata</taxon>
        <taxon>Euteleostomi</taxon>
        <taxon>Mammalia</taxon>
        <taxon>Eutheria</taxon>
        <taxon>Laurasiatheria</taxon>
        <taxon>Artiodactyla</taxon>
        <taxon>Ruminantia</taxon>
        <taxon>Pecora</taxon>
        <taxon>Bovidae</taxon>
        <taxon>Bovinae</taxon>
        <taxon>Bos</taxon>
    </lineage>
</organism>